<feature type="chain" id="PRO_1000000715" description="Endoribonuclease YbeY">
    <location>
        <begin position="1"/>
        <end position="166"/>
    </location>
</feature>
<feature type="binding site" evidence="1">
    <location>
        <position position="132"/>
    </location>
    <ligand>
        <name>Zn(2+)</name>
        <dbReference type="ChEBI" id="CHEBI:29105"/>
        <note>catalytic</note>
    </ligand>
</feature>
<feature type="binding site" evidence="1">
    <location>
        <position position="136"/>
    </location>
    <ligand>
        <name>Zn(2+)</name>
        <dbReference type="ChEBI" id="CHEBI:29105"/>
        <note>catalytic</note>
    </ligand>
</feature>
<feature type="binding site" evidence="1">
    <location>
        <position position="142"/>
    </location>
    <ligand>
        <name>Zn(2+)</name>
        <dbReference type="ChEBI" id="CHEBI:29105"/>
        <note>catalytic</note>
    </ligand>
</feature>
<sequence>MIYIDNRQNKIKVNEELENKIKEIIDYALKEEKVNIDYEISVVFIDNNSIKEINKDYRNIDKATDVLSFPMLDYEDGEVFKDIYLNYEFDESDLDEGNLVLGDIALSLEKAEEQSKEFGHSFLRETCYLTIHSVLHLLGYDHMEEDEKVIMRQREEEILKSFNLHR</sequence>
<accession>A7FXK4</accession>
<protein>
    <recommendedName>
        <fullName evidence="1">Endoribonuclease YbeY</fullName>
        <ecNumber evidence="1">3.1.-.-</ecNumber>
    </recommendedName>
</protein>
<reference key="1">
    <citation type="journal article" date="2007" name="PLoS ONE">
        <title>Analysis of the neurotoxin complex genes in Clostridium botulinum A1-A4 and B1 strains: BoNT/A3, /Ba4 and /B1 clusters are located within plasmids.</title>
        <authorList>
            <person name="Smith T.J."/>
            <person name="Hill K.K."/>
            <person name="Foley B.T."/>
            <person name="Detter J.C."/>
            <person name="Munk A.C."/>
            <person name="Bruce D.C."/>
            <person name="Doggett N.A."/>
            <person name="Smith L.A."/>
            <person name="Marks J.D."/>
            <person name="Xie G."/>
            <person name="Brettin T.S."/>
        </authorList>
    </citation>
    <scope>NUCLEOTIDE SEQUENCE [LARGE SCALE GENOMIC DNA]</scope>
    <source>
        <strain>ATCC 19397 / Type A</strain>
    </source>
</reference>
<evidence type="ECO:0000255" key="1">
    <source>
        <dbReference type="HAMAP-Rule" id="MF_00009"/>
    </source>
</evidence>
<proteinExistence type="inferred from homology"/>
<comment type="function">
    <text evidence="1">Single strand-specific metallo-endoribonuclease involved in late-stage 70S ribosome quality control and in maturation of the 3' terminus of the 16S rRNA.</text>
</comment>
<comment type="cofactor">
    <cofactor evidence="1">
        <name>Zn(2+)</name>
        <dbReference type="ChEBI" id="CHEBI:29105"/>
    </cofactor>
    <text evidence="1">Binds 1 zinc ion.</text>
</comment>
<comment type="subcellular location">
    <subcellularLocation>
        <location evidence="1">Cytoplasm</location>
    </subcellularLocation>
</comment>
<comment type="similarity">
    <text evidence="1">Belongs to the endoribonuclease YbeY family.</text>
</comment>
<keyword id="KW-0963">Cytoplasm</keyword>
<keyword id="KW-0255">Endonuclease</keyword>
<keyword id="KW-0378">Hydrolase</keyword>
<keyword id="KW-0479">Metal-binding</keyword>
<keyword id="KW-0540">Nuclease</keyword>
<keyword id="KW-0690">Ribosome biogenesis</keyword>
<keyword id="KW-0698">rRNA processing</keyword>
<keyword id="KW-0862">Zinc</keyword>
<name>YBEY_CLOB1</name>
<organism>
    <name type="scientific">Clostridium botulinum (strain ATCC 19397 / Type A)</name>
    <dbReference type="NCBI Taxonomy" id="441770"/>
    <lineage>
        <taxon>Bacteria</taxon>
        <taxon>Bacillati</taxon>
        <taxon>Bacillota</taxon>
        <taxon>Clostridia</taxon>
        <taxon>Eubacteriales</taxon>
        <taxon>Clostridiaceae</taxon>
        <taxon>Clostridium</taxon>
    </lineage>
</organism>
<dbReference type="EC" id="3.1.-.-" evidence="1"/>
<dbReference type="EMBL" id="CP000726">
    <property type="protein sequence ID" value="ABS34561.1"/>
    <property type="molecule type" value="Genomic_DNA"/>
</dbReference>
<dbReference type="RefSeq" id="WP_012047996.1">
    <property type="nucleotide sequence ID" value="NC_009697.1"/>
</dbReference>
<dbReference type="SMR" id="A7FXK4"/>
<dbReference type="GeneID" id="5185649"/>
<dbReference type="KEGG" id="cba:CLB_2912"/>
<dbReference type="HOGENOM" id="CLU_106710_3_0_9"/>
<dbReference type="GO" id="GO:0005737">
    <property type="term" value="C:cytoplasm"/>
    <property type="evidence" value="ECO:0007669"/>
    <property type="project" value="UniProtKB-SubCell"/>
</dbReference>
<dbReference type="GO" id="GO:0004222">
    <property type="term" value="F:metalloendopeptidase activity"/>
    <property type="evidence" value="ECO:0007669"/>
    <property type="project" value="InterPro"/>
</dbReference>
<dbReference type="GO" id="GO:0004521">
    <property type="term" value="F:RNA endonuclease activity"/>
    <property type="evidence" value="ECO:0007669"/>
    <property type="project" value="UniProtKB-UniRule"/>
</dbReference>
<dbReference type="GO" id="GO:0008270">
    <property type="term" value="F:zinc ion binding"/>
    <property type="evidence" value="ECO:0007669"/>
    <property type="project" value="UniProtKB-UniRule"/>
</dbReference>
<dbReference type="GO" id="GO:0006364">
    <property type="term" value="P:rRNA processing"/>
    <property type="evidence" value="ECO:0007669"/>
    <property type="project" value="UniProtKB-UniRule"/>
</dbReference>
<dbReference type="Gene3D" id="3.40.390.30">
    <property type="entry name" value="Metalloproteases ('zincins'), catalytic domain"/>
    <property type="match status" value="1"/>
</dbReference>
<dbReference type="HAMAP" id="MF_00009">
    <property type="entry name" value="Endoribonucl_YbeY"/>
    <property type="match status" value="1"/>
</dbReference>
<dbReference type="InterPro" id="IPR023091">
    <property type="entry name" value="MetalPrtase_cat_dom_sf_prd"/>
</dbReference>
<dbReference type="InterPro" id="IPR002036">
    <property type="entry name" value="YbeY"/>
</dbReference>
<dbReference type="InterPro" id="IPR020549">
    <property type="entry name" value="YbeY_CS"/>
</dbReference>
<dbReference type="NCBIfam" id="TIGR00043">
    <property type="entry name" value="rRNA maturation RNase YbeY"/>
    <property type="match status" value="1"/>
</dbReference>
<dbReference type="PANTHER" id="PTHR46986">
    <property type="entry name" value="ENDORIBONUCLEASE YBEY, CHLOROPLASTIC"/>
    <property type="match status" value="1"/>
</dbReference>
<dbReference type="PANTHER" id="PTHR46986:SF1">
    <property type="entry name" value="ENDORIBONUCLEASE YBEY, CHLOROPLASTIC"/>
    <property type="match status" value="1"/>
</dbReference>
<dbReference type="Pfam" id="PF02130">
    <property type="entry name" value="YbeY"/>
    <property type="match status" value="1"/>
</dbReference>
<dbReference type="SUPFAM" id="SSF55486">
    <property type="entry name" value="Metalloproteases ('zincins'), catalytic domain"/>
    <property type="match status" value="1"/>
</dbReference>
<dbReference type="PROSITE" id="PS01306">
    <property type="entry name" value="UPF0054"/>
    <property type="match status" value="1"/>
</dbReference>
<gene>
    <name evidence="1" type="primary">ybeY</name>
    <name type="ordered locus">CLB_2912</name>
</gene>